<accession>O94522</accession>
<proteinExistence type="evidence at protein level"/>
<comment type="function">
    <text evidence="4">Component of the chromatin structure remodeling complex (RSC), which is involved in transcription regulation and nucleosome positioning. Controls particularly membrane and organelle development genes.</text>
</comment>
<comment type="subunit">
    <text evidence="4">Component of the RSC complex composed of at least arp9, arp42, rsc1, rsc4, rsc7, rsc9, rsc58, sfh1, snf21, ssr1, ssr2, ssr3 and ssr4. The complex probably interacts with histone and histone variant components of centromeric chromatin.</text>
</comment>
<comment type="subcellular location">
    <subcellularLocation>
        <location evidence="2">Nucleus</location>
    </subcellularLocation>
</comment>
<comment type="similarity">
    <text evidence="5">Belongs to the RSC7/SWP82 family. RSC7 subfamily.</text>
</comment>
<reference key="1">
    <citation type="journal article" date="2002" name="Nature">
        <title>The genome sequence of Schizosaccharomyces pombe.</title>
        <authorList>
            <person name="Wood V."/>
            <person name="Gwilliam R."/>
            <person name="Rajandream M.A."/>
            <person name="Lyne M.H."/>
            <person name="Lyne R."/>
            <person name="Stewart A."/>
            <person name="Sgouros J.G."/>
            <person name="Peat N."/>
            <person name="Hayles J."/>
            <person name="Baker S.G."/>
            <person name="Basham D."/>
            <person name="Bowman S."/>
            <person name="Brooks K."/>
            <person name="Brown D."/>
            <person name="Brown S."/>
            <person name="Chillingworth T."/>
            <person name="Churcher C.M."/>
            <person name="Collins M."/>
            <person name="Connor R."/>
            <person name="Cronin A."/>
            <person name="Davis P."/>
            <person name="Feltwell T."/>
            <person name="Fraser A."/>
            <person name="Gentles S."/>
            <person name="Goble A."/>
            <person name="Hamlin N."/>
            <person name="Harris D.E."/>
            <person name="Hidalgo J."/>
            <person name="Hodgson G."/>
            <person name="Holroyd S."/>
            <person name="Hornsby T."/>
            <person name="Howarth S."/>
            <person name="Huckle E.J."/>
            <person name="Hunt S."/>
            <person name="Jagels K."/>
            <person name="James K.D."/>
            <person name="Jones L."/>
            <person name="Jones M."/>
            <person name="Leather S."/>
            <person name="McDonald S."/>
            <person name="McLean J."/>
            <person name="Mooney P."/>
            <person name="Moule S."/>
            <person name="Mungall K.L."/>
            <person name="Murphy L.D."/>
            <person name="Niblett D."/>
            <person name="Odell C."/>
            <person name="Oliver K."/>
            <person name="O'Neil S."/>
            <person name="Pearson D."/>
            <person name="Quail M.A."/>
            <person name="Rabbinowitsch E."/>
            <person name="Rutherford K.M."/>
            <person name="Rutter S."/>
            <person name="Saunders D."/>
            <person name="Seeger K."/>
            <person name="Sharp S."/>
            <person name="Skelton J."/>
            <person name="Simmonds M.N."/>
            <person name="Squares R."/>
            <person name="Squares S."/>
            <person name="Stevens K."/>
            <person name="Taylor K."/>
            <person name="Taylor R.G."/>
            <person name="Tivey A."/>
            <person name="Walsh S.V."/>
            <person name="Warren T."/>
            <person name="Whitehead S."/>
            <person name="Woodward J.R."/>
            <person name="Volckaert G."/>
            <person name="Aert R."/>
            <person name="Robben J."/>
            <person name="Grymonprez B."/>
            <person name="Weltjens I."/>
            <person name="Vanstreels E."/>
            <person name="Rieger M."/>
            <person name="Schaefer M."/>
            <person name="Mueller-Auer S."/>
            <person name="Gabel C."/>
            <person name="Fuchs M."/>
            <person name="Duesterhoeft A."/>
            <person name="Fritzc C."/>
            <person name="Holzer E."/>
            <person name="Moestl D."/>
            <person name="Hilbert H."/>
            <person name="Borzym K."/>
            <person name="Langer I."/>
            <person name="Beck A."/>
            <person name="Lehrach H."/>
            <person name="Reinhardt R."/>
            <person name="Pohl T.M."/>
            <person name="Eger P."/>
            <person name="Zimmermann W."/>
            <person name="Wedler H."/>
            <person name="Wambutt R."/>
            <person name="Purnelle B."/>
            <person name="Goffeau A."/>
            <person name="Cadieu E."/>
            <person name="Dreano S."/>
            <person name="Gloux S."/>
            <person name="Lelaure V."/>
            <person name="Mottier S."/>
            <person name="Galibert F."/>
            <person name="Aves S.J."/>
            <person name="Xiang Z."/>
            <person name="Hunt C."/>
            <person name="Moore K."/>
            <person name="Hurst S.M."/>
            <person name="Lucas M."/>
            <person name="Rochet M."/>
            <person name="Gaillardin C."/>
            <person name="Tallada V.A."/>
            <person name="Garzon A."/>
            <person name="Thode G."/>
            <person name="Daga R.R."/>
            <person name="Cruzado L."/>
            <person name="Jimenez J."/>
            <person name="Sanchez M."/>
            <person name="del Rey F."/>
            <person name="Benito J."/>
            <person name="Dominguez A."/>
            <person name="Revuelta J.L."/>
            <person name="Moreno S."/>
            <person name="Armstrong J."/>
            <person name="Forsburg S.L."/>
            <person name="Cerutti L."/>
            <person name="Lowe T."/>
            <person name="McCombie W.R."/>
            <person name="Paulsen I."/>
            <person name="Potashkin J."/>
            <person name="Shpakovski G.V."/>
            <person name="Ussery D."/>
            <person name="Barrell B.G."/>
            <person name="Nurse P."/>
        </authorList>
    </citation>
    <scope>NUCLEOTIDE SEQUENCE [LARGE SCALE GENOMIC DNA]</scope>
    <source>
        <strain>972 / ATCC 24843</strain>
    </source>
</reference>
<reference key="2">
    <citation type="journal article" date="2006" name="Nat. Biotechnol.">
        <title>ORFeome cloning and global analysis of protein localization in the fission yeast Schizosaccharomyces pombe.</title>
        <authorList>
            <person name="Matsuyama A."/>
            <person name="Arai R."/>
            <person name="Yashiroda Y."/>
            <person name="Shirai A."/>
            <person name="Kamata A."/>
            <person name="Sekido S."/>
            <person name="Kobayashi Y."/>
            <person name="Hashimoto A."/>
            <person name="Hamamoto M."/>
            <person name="Hiraoka Y."/>
            <person name="Horinouchi S."/>
            <person name="Yoshida M."/>
        </authorList>
    </citation>
    <scope>SUBCELLULAR LOCATION [LARGE SCALE ANALYSIS]</scope>
</reference>
<reference key="3">
    <citation type="journal article" date="2008" name="J. Proteome Res.">
        <title>Phosphoproteome analysis of fission yeast.</title>
        <authorList>
            <person name="Wilson-Grady J.T."/>
            <person name="Villen J."/>
            <person name="Gygi S.P."/>
        </authorList>
    </citation>
    <scope>PHOSPHORYLATION [LARGE SCALE ANALYSIS] AT SER-36 AND SER-37</scope>
    <scope>IDENTIFICATION BY MASS SPECTROMETRY</scope>
</reference>
<reference key="4">
    <citation type="journal article" date="2008" name="Nat. Struct. Mol. Biol.">
        <title>Fission yeast SWI/SNF and RSC complexes show compositional and functional differences from budding yeast.</title>
        <authorList>
            <person name="Monahan B.J."/>
            <person name="Villen J."/>
            <person name="Marguerat S."/>
            <person name="Baehler J."/>
            <person name="Gygi S.P."/>
            <person name="Winston F."/>
        </authorList>
    </citation>
    <scope>IDENTIFICATION IN THE RSC COMPLEX</scope>
    <scope>FUNCTION OF THE COMPLEX</scope>
    <scope>IDENTIFICATION BY MASS SPECTROMETRY</scope>
</reference>
<protein>
    <recommendedName>
        <fullName>Chromatin structure-remodeling complex subunit rsc7</fullName>
    </recommendedName>
    <alternativeName>
        <fullName>Remodel the structure of chromatin complex subunit 7</fullName>
    </alternativeName>
</protein>
<gene>
    <name type="primary">rsc7</name>
    <name type="ORF">SPCC1281.05</name>
</gene>
<keyword id="KW-0156">Chromatin regulator</keyword>
<keyword id="KW-0539">Nucleus</keyword>
<keyword id="KW-0597">Phosphoprotein</keyword>
<keyword id="KW-1185">Reference proteome</keyword>
<keyword id="KW-0804">Transcription</keyword>
<keyword id="KW-0805">Transcription regulation</keyword>
<evidence type="ECO:0000256" key="1">
    <source>
        <dbReference type="SAM" id="MobiDB-lite"/>
    </source>
</evidence>
<evidence type="ECO:0000269" key="2">
    <source>
    </source>
</evidence>
<evidence type="ECO:0000269" key="3">
    <source>
    </source>
</evidence>
<evidence type="ECO:0000269" key="4">
    <source>
    </source>
</evidence>
<evidence type="ECO:0000305" key="5"/>
<dbReference type="EMBL" id="CU329672">
    <property type="protein sequence ID" value="CAA22826.1"/>
    <property type="molecule type" value="Genomic_DNA"/>
</dbReference>
<dbReference type="PIR" id="T40924">
    <property type="entry name" value="T40924"/>
</dbReference>
<dbReference type="RefSeq" id="NP_588169.1">
    <property type="nucleotide sequence ID" value="NM_001023158.2"/>
</dbReference>
<dbReference type="BioGRID" id="275417">
    <property type="interactions" value="14"/>
</dbReference>
<dbReference type="ComplexPortal" id="CPX-6363">
    <property type="entry name" value="RSC chromatin remodelling complex"/>
</dbReference>
<dbReference type="DIP" id="DIP-48393N"/>
<dbReference type="FunCoup" id="O94522">
    <property type="interactions" value="250"/>
</dbReference>
<dbReference type="IntAct" id="O94522">
    <property type="interactions" value="12"/>
</dbReference>
<dbReference type="STRING" id="284812.O94522"/>
<dbReference type="iPTMnet" id="O94522"/>
<dbReference type="SwissPalm" id="O94522"/>
<dbReference type="PaxDb" id="4896-SPCC1281.05.1"/>
<dbReference type="EnsemblFungi" id="SPCC1281.05.1">
    <property type="protein sequence ID" value="SPCC1281.05.1:pep"/>
    <property type="gene ID" value="SPCC1281.05"/>
</dbReference>
<dbReference type="GeneID" id="2538836"/>
<dbReference type="KEGG" id="spo:2538836"/>
<dbReference type="PomBase" id="SPCC1281.05">
    <property type="gene designation" value="rsc7"/>
</dbReference>
<dbReference type="VEuPathDB" id="FungiDB:SPCC1281.05"/>
<dbReference type="eggNOG" id="ENOG502QW07">
    <property type="taxonomic scope" value="Eukaryota"/>
</dbReference>
<dbReference type="HOGENOM" id="CLU_022149_2_1_1"/>
<dbReference type="InParanoid" id="O94522"/>
<dbReference type="OMA" id="CRTFTCL"/>
<dbReference type="PhylomeDB" id="O94522"/>
<dbReference type="Reactome" id="R-SPO-4551638">
    <property type="pathway name" value="SUMOylation of chromatin organization proteins"/>
</dbReference>
<dbReference type="PRO" id="PR:O94522"/>
<dbReference type="Proteomes" id="UP000002485">
    <property type="component" value="Chromosome III"/>
</dbReference>
<dbReference type="GO" id="GO:0000785">
    <property type="term" value="C:chromatin"/>
    <property type="evidence" value="ECO:0000303"/>
    <property type="project" value="ComplexPortal"/>
</dbReference>
<dbReference type="GO" id="GO:0005634">
    <property type="term" value="C:nucleus"/>
    <property type="evidence" value="ECO:0007005"/>
    <property type="project" value="PomBase"/>
</dbReference>
<dbReference type="GO" id="GO:0016586">
    <property type="term" value="C:RSC-type complex"/>
    <property type="evidence" value="ECO:0000314"/>
    <property type="project" value="PomBase"/>
</dbReference>
<dbReference type="GO" id="GO:0031490">
    <property type="term" value="F:chromatin DNA binding"/>
    <property type="evidence" value="ECO:0000318"/>
    <property type="project" value="GO_Central"/>
</dbReference>
<dbReference type="GO" id="GO:0006338">
    <property type="term" value="P:chromatin remodeling"/>
    <property type="evidence" value="ECO:0000303"/>
    <property type="project" value="ComplexPortal"/>
</dbReference>
<dbReference type="GO" id="GO:0006368">
    <property type="term" value="P:transcription elongation by RNA polymerase II"/>
    <property type="evidence" value="ECO:0000266"/>
    <property type="project" value="PomBase"/>
</dbReference>
<dbReference type="GO" id="GO:0045815">
    <property type="term" value="P:transcription initiation-coupled chromatin remodeling"/>
    <property type="evidence" value="ECO:0000305"/>
    <property type="project" value="PomBase"/>
</dbReference>
<dbReference type="InterPro" id="IPR013933">
    <property type="entry name" value="CRC_Rsc7/Swp82"/>
</dbReference>
<dbReference type="PANTHER" id="PTHR22597:SF3">
    <property type="entry name" value="CHROMATIN STRUCTURE-REMODELING COMPLEX SUBUNIT RSC7"/>
    <property type="match status" value="1"/>
</dbReference>
<dbReference type="PANTHER" id="PTHR22597">
    <property type="entry name" value="POLYCOMB GROUP PROTEIN"/>
    <property type="match status" value="1"/>
</dbReference>
<dbReference type="Pfam" id="PF08624">
    <property type="entry name" value="CRC_subunit"/>
    <property type="match status" value="1"/>
</dbReference>
<organism>
    <name type="scientific">Schizosaccharomyces pombe (strain 972 / ATCC 24843)</name>
    <name type="common">Fission yeast</name>
    <dbReference type="NCBI Taxonomy" id="284812"/>
    <lineage>
        <taxon>Eukaryota</taxon>
        <taxon>Fungi</taxon>
        <taxon>Dikarya</taxon>
        <taxon>Ascomycota</taxon>
        <taxon>Taphrinomycotina</taxon>
        <taxon>Schizosaccharomycetes</taxon>
        <taxon>Schizosaccharomycetales</taxon>
        <taxon>Schizosaccharomycetaceae</taxon>
        <taxon>Schizosaccharomyces</taxon>
    </lineage>
</organism>
<feature type="chain" id="PRO_0000373988" description="Chromatin structure-remodeling complex subunit rsc7">
    <location>
        <begin position="1"/>
        <end position="390"/>
    </location>
</feature>
<feature type="region of interest" description="Disordered" evidence="1">
    <location>
        <begin position="1"/>
        <end position="72"/>
    </location>
</feature>
<feature type="compositionally biased region" description="Polar residues" evidence="1">
    <location>
        <begin position="1"/>
        <end position="17"/>
    </location>
</feature>
<feature type="compositionally biased region" description="Basic residues" evidence="1">
    <location>
        <begin position="47"/>
        <end position="56"/>
    </location>
</feature>
<feature type="compositionally biased region" description="Low complexity" evidence="1">
    <location>
        <begin position="57"/>
        <end position="70"/>
    </location>
</feature>
<feature type="modified residue" description="Phosphoserine" evidence="3">
    <location>
        <position position="36"/>
    </location>
</feature>
<feature type="modified residue" description="Phosphoserine" evidence="3">
    <location>
        <position position="37"/>
    </location>
</feature>
<name>RSC7_SCHPO</name>
<sequence length="390" mass="44009">MDSTAGSDASTPTNHTVSSKKRRGRPPKGSYAAYGSSDDDDEEYSGRTRRRNRNTRPRVSAPSSSSTVVPKDLYSHRATLEDDELNFGVVDPEGEKKVNELGYLNGGREYRCRTFTCLGRGNRLYMLSTEPARAMGYRDSYLLFLKHRSLHKIIVDDSEKWDLIERNIIPHSYKGRAVGIVAARSIFREFGARIIVGGRRIVDDYWEGEFRARGFVEGELADPDDKLPPPGMPYNRNQYVAWHGASAVYHPQPSLEAQLPAAARKRKKEPPKDATWLFQHAKATAAYNNDITKYLVQKQDIGYFEPHTNLLHVPLNTQPTKTHWIQAKTGTECPAPKLDILVALNSDVAPQVSIANIPPSVYASCPLHVQEAIRKRQEQEIRSIRLNSMY</sequence>